<accession>P0A7D2</accession>
<accession>P23932</accession>
<comment type="function">
    <text evidence="1">Hydrolyzes ribosome-free peptidyl-tRNAs (with 1 or more amino acids incorporated), which drop off the ribosome during protein synthesis, or as a result of ribosome stalling.</text>
</comment>
<comment type="function">
    <text evidence="1">Catalyzes the release of premature peptidyl moieties from peptidyl-tRNA molecules trapped in stalled 50S ribosomal subunits, and thus maintains levels of free tRNAs and 50S ribosomes.</text>
</comment>
<comment type="catalytic activity">
    <reaction evidence="1">
        <text>an N-acyl-L-alpha-aminoacyl-tRNA + H2O = an N-acyl-L-amino acid + a tRNA + H(+)</text>
        <dbReference type="Rhea" id="RHEA:54448"/>
        <dbReference type="Rhea" id="RHEA-COMP:10123"/>
        <dbReference type="Rhea" id="RHEA-COMP:13883"/>
        <dbReference type="ChEBI" id="CHEBI:15377"/>
        <dbReference type="ChEBI" id="CHEBI:15378"/>
        <dbReference type="ChEBI" id="CHEBI:59874"/>
        <dbReference type="ChEBI" id="CHEBI:78442"/>
        <dbReference type="ChEBI" id="CHEBI:138191"/>
        <dbReference type="EC" id="3.1.1.29"/>
    </reaction>
</comment>
<comment type="subunit">
    <text evidence="1">Monomer.</text>
</comment>
<comment type="subcellular location">
    <subcellularLocation>
        <location evidence="1">Cytoplasm</location>
    </subcellularLocation>
</comment>
<comment type="similarity">
    <text evidence="1">Belongs to the PTH family.</text>
</comment>
<evidence type="ECO:0000255" key="1">
    <source>
        <dbReference type="HAMAP-Rule" id="MF_00083"/>
    </source>
</evidence>
<protein>
    <recommendedName>
        <fullName evidence="1">Peptidyl-tRNA hydrolase</fullName>
        <shortName evidence="1">Pth</shortName>
        <ecNumber evidence="1">3.1.1.29</ecNumber>
    </recommendedName>
</protein>
<reference key="1">
    <citation type="journal article" date="2002" name="Proc. Natl. Acad. Sci. U.S.A.">
        <title>Extensive mosaic structure revealed by the complete genome sequence of uropathogenic Escherichia coli.</title>
        <authorList>
            <person name="Welch R.A."/>
            <person name="Burland V."/>
            <person name="Plunkett G. III"/>
            <person name="Redford P."/>
            <person name="Roesch P."/>
            <person name="Rasko D."/>
            <person name="Buckles E.L."/>
            <person name="Liou S.-R."/>
            <person name="Boutin A."/>
            <person name="Hackett J."/>
            <person name="Stroud D."/>
            <person name="Mayhew G.F."/>
            <person name="Rose D.J."/>
            <person name="Zhou S."/>
            <person name="Schwartz D.C."/>
            <person name="Perna N.T."/>
            <person name="Mobley H.L.T."/>
            <person name="Donnenberg M.S."/>
            <person name="Blattner F.R."/>
        </authorList>
    </citation>
    <scope>NUCLEOTIDE SEQUENCE [LARGE SCALE GENOMIC DNA]</scope>
    <source>
        <strain>CFT073 / ATCC 700928 / UPEC</strain>
    </source>
</reference>
<dbReference type="EC" id="3.1.1.29" evidence="1"/>
<dbReference type="EMBL" id="AE014075">
    <property type="protein sequence ID" value="AAN80127.1"/>
    <property type="molecule type" value="Genomic_DNA"/>
</dbReference>
<dbReference type="RefSeq" id="WP_000152933.1">
    <property type="nucleotide sequence ID" value="NZ_CP051263.1"/>
</dbReference>
<dbReference type="SMR" id="P0A7D2"/>
<dbReference type="STRING" id="199310.c1662"/>
<dbReference type="GeneID" id="93775269"/>
<dbReference type="KEGG" id="ecc:c1662"/>
<dbReference type="eggNOG" id="COG0193">
    <property type="taxonomic scope" value="Bacteria"/>
</dbReference>
<dbReference type="HOGENOM" id="CLU_062456_3_1_6"/>
<dbReference type="BioCyc" id="ECOL199310:C1662-MONOMER"/>
<dbReference type="SABIO-RK" id="P0A7D2"/>
<dbReference type="Proteomes" id="UP000001410">
    <property type="component" value="Chromosome"/>
</dbReference>
<dbReference type="GO" id="GO:0005737">
    <property type="term" value="C:cytoplasm"/>
    <property type="evidence" value="ECO:0007669"/>
    <property type="project" value="UniProtKB-SubCell"/>
</dbReference>
<dbReference type="GO" id="GO:0004045">
    <property type="term" value="F:peptidyl-tRNA hydrolase activity"/>
    <property type="evidence" value="ECO:0007669"/>
    <property type="project" value="UniProtKB-UniRule"/>
</dbReference>
<dbReference type="GO" id="GO:0000049">
    <property type="term" value="F:tRNA binding"/>
    <property type="evidence" value="ECO:0007669"/>
    <property type="project" value="UniProtKB-UniRule"/>
</dbReference>
<dbReference type="GO" id="GO:0006515">
    <property type="term" value="P:protein quality control for misfolded or incompletely synthesized proteins"/>
    <property type="evidence" value="ECO:0007669"/>
    <property type="project" value="UniProtKB-UniRule"/>
</dbReference>
<dbReference type="GO" id="GO:0072344">
    <property type="term" value="P:rescue of stalled ribosome"/>
    <property type="evidence" value="ECO:0007669"/>
    <property type="project" value="UniProtKB-UniRule"/>
</dbReference>
<dbReference type="CDD" id="cd00462">
    <property type="entry name" value="PTH"/>
    <property type="match status" value="1"/>
</dbReference>
<dbReference type="FunFam" id="3.40.50.1470:FF:000001">
    <property type="entry name" value="Peptidyl-tRNA hydrolase"/>
    <property type="match status" value="1"/>
</dbReference>
<dbReference type="Gene3D" id="3.40.50.1470">
    <property type="entry name" value="Peptidyl-tRNA hydrolase"/>
    <property type="match status" value="1"/>
</dbReference>
<dbReference type="HAMAP" id="MF_00083">
    <property type="entry name" value="Pept_tRNA_hydro_bact"/>
    <property type="match status" value="1"/>
</dbReference>
<dbReference type="InterPro" id="IPR001328">
    <property type="entry name" value="Pept_tRNA_hydro"/>
</dbReference>
<dbReference type="InterPro" id="IPR018171">
    <property type="entry name" value="Pept_tRNA_hydro_CS"/>
</dbReference>
<dbReference type="InterPro" id="IPR036416">
    <property type="entry name" value="Pept_tRNA_hydro_sf"/>
</dbReference>
<dbReference type="NCBIfam" id="TIGR00447">
    <property type="entry name" value="pth"/>
    <property type="match status" value="1"/>
</dbReference>
<dbReference type="PANTHER" id="PTHR17224">
    <property type="entry name" value="PEPTIDYL-TRNA HYDROLASE"/>
    <property type="match status" value="1"/>
</dbReference>
<dbReference type="PANTHER" id="PTHR17224:SF1">
    <property type="entry name" value="PEPTIDYL-TRNA HYDROLASE"/>
    <property type="match status" value="1"/>
</dbReference>
<dbReference type="Pfam" id="PF01195">
    <property type="entry name" value="Pept_tRNA_hydro"/>
    <property type="match status" value="1"/>
</dbReference>
<dbReference type="SUPFAM" id="SSF53178">
    <property type="entry name" value="Peptidyl-tRNA hydrolase-like"/>
    <property type="match status" value="1"/>
</dbReference>
<dbReference type="PROSITE" id="PS01195">
    <property type="entry name" value="PEPT_TRNA_HYDROL_1"/>
    <property type="match status" value="1"/>
</dbReference>
<dbReference type="PROSITE" id="PS01196">
    <property type="entry name" value="PEPT_TRNA_HYDROL_2"/>
    <property type="match status" value="1"/>
</dbReference>
<gene>
    <name evidence="1" type="primary">pth</name>
    <name type="ordered locus">c1662</name>
</gene>
<organism>
    <name type="scientific">Escherichia coli O6:H1 (strain CFT073 / ATCC 700928 / UPEC)</name>
    <dbReference type="NCBI Taxonomy" id="199310"/>
    <lineage>
        <taxon>Bacteria</taxon>
        <taxon>Pseudomonadati</taxon>
        <taxon>Pseudomonadota</taxon>
        <taxon>Gammaproteobacteria</taxon>
        <taxon>Enterobacterales</taxon>
        <taxon>Enterobacteriaceae</taxon>
        <taxon>Escherichia</taxon>
    </lineage>
</organism>
<name>PTH_ECOL6</name>
<proteinExistence type="inferred from homology"/>
<keyword id="KW-0963">Cytoplasm</keyword>
<keyword id="KW-0378">Hydrolase</keyword>
<keyword id="KW-1185">Reference proteome</keyword>
<keyword id="KW-0694">RNA-binding</keyword>
<keyword id="KW-0820">tRNA-binding</keyword>
<feature type="chain" id="PRO_0000187735" description="Peptidyl-tRNA hydrolase">
    <location>
        <begin position="1"/>
        <end position="194"/>
    </location>
</feature>
<feature type="active site" description="Proton acceptor" evidence="1">
    <location>
        <position position="21"/>
    </location>
</feature>
<feature type="binding site" evidence="1">
    <location>
        <position position="16"/>
    </location>
    <ligand>
        <name>tRNA</name>
        <dbReference type="ChEBI" id="CHEBI:17843"/>
    </ligand>
</feature>
<feature type="binding site" evidence="1">
    <location>
        <position position="67"/>
    </location>
    <ligand>
        <name>tRNA</name>
        <dbReference type="ChEBI" id="CHEBI:17843"/>
    </ligand>
</feature>
<feature type="binding site" evidence="1">
    <location>
        <position position="69"/>
    </location>
    <ligand>
        <name>tRNA</name>
        <dbReference type="ChEBI" id="CHEBI:17843"/>
    </ligand>
</feature>
<feature type="binding site" evidence="1">
    <location>
        <position position="115"/>
    </location>
    <ligand>
        <name>tRNA</name>
        <dbReference type="ChEBI" id="CHEBI:17843"/>
    </ligand>
</feature>
<feature type="site" description="Discriminates between blocked and unblocked aminoacyl-tRNA" evidence="1">
    <location>
        <position position="11"/>
    </location>
</feature>
<feature type="site" description="Stabilizes the basic form of H active site to accept a proton" evidence="1">
    <location>
        <position position="94"/>
    </location>
</feature>
<sequence>MTIKLIVGLANPGAEYAATRHNAGAWFVDLLAERLRAPLREEAKFFGYTSRVTLGGEDVRLLVPTTFMNLSGKAVAAMASFFRINPDEILVAHDELDLPPGVAKFKLGGGHGGHNGLKDIISKLGNNPNFHRLRIGIGHPGDKNKVVGFVLGKPPVSEQKLIDEAIDEAARCTEMWFTDGLTKATNRLHAFKAQ</sequence>